<name>EXOS6_HUMAN</name>
<protein>
    <recommendedName>
        <fullName>Exosome complex component MTR3</fullName>
    </recommendedName>
    <alternativeName>
        <fullName>Exosome component 6</fullName>
    </alternativeName>
    <alternativeName>
        <fullName>mRNA transport regulator 3 homolog</fullName>
        <shortName>hMtr3</shortName>
    </alternativeName>
    <alternativeName>
        <fullName>p11</fullName>
    </alternativeName>
</protein>
<evidence type="ECO:0000256" key="1">
    <source>
        <dbReference type="SAM" id="MobiDB-lite"/>
    </source>
</evidence>
<evidence type="ECO:0000269" key="2">
    <source>
    </source>
</evidence>
<evidence type="ECO:0000269" key="3">
    <source>
    </source>
</evidence>
<evidence type="ECO:0000269" key="4">
    <source>
    </source>
</evidence>
<evidence type="ECO:0000269" key="5">
    <source>
    </source>
</evidence>
<evidence type="ECO:0000269" key="6">
    <source>
    </source>
</evidence>
<evidence type="ECO:0000305" key="7"/>
<evidence type="ECO:0007744" key="8">
    <source>
        <dbReference type="PDB" id="2NN6"/>
    </source>
</evidence>
<evidence type="ECO:0007744" key="9">
    <source>
        <dbReference type="PDB" id="6D6Q"/>
    </source>
</evidence>
<evidence type="ECO:0007744" key="10">
    <source>
        <dbReference type="PDB" id="6D6R"/>
    </source>
</evidence>
<evidence type="ECO:0007744" key="11">
    <source>
        <dbReference type="PDB" id="6H25"/>
    </source>
</evidence>
<evidence type="ECO:0007829" key="12">
    <source>
        <dbReference type="PDB" id="2NN6"/>
    </source>
</evidence>
<evidence type="ECO:0007829" key="13">
    <source>
        <dbReference type="PDB" id="6D6Q"/>
    </source>
</evidence>
<gene>
    <name type="primary">EXOSC6</name>
    <name type="synonym">MTR3</name>
</gene>
<organism>
    <name type="scientific">Homo sapiens</name>
    <name type="common">Human</name>
    <dbReference type="NCBI Taxonomy" id="9606"/>
    <lineage>
        <taxon>Eukaryota</taxon>
        <taxon>Metazoa</taxon>
        <taxon>Chordata</taxon>
        <taxon>Craniata</taxon>
        <taxon>Vertebrata</taxon>
        <taxon>Euteleostomi</taxon>
        <taxon>Mammalia</taxon>
        <taxon>Eutheria</taxon>
        <taxon>Euarchontoglires</taxon>
        <taxon>Primates</taxon>
        <taxon>Haplorrhini</taxon>
        <taxon>Catarrhini</taxon>
        <taxon>Hominidae</taxon>
        <taxon>Homo</taxon>
    </lineage>
</organism>
<proteinExistence type="evidence at protein level"/>
<dbReference type="EMBL" id="AC009060">
    <property type="status" value="NOT_ANNOTATED_CDS"/>
    <property type="molecule type" value="Genomic_DNA"/>
</dbReference>
<dbReference type="EMBL" id="BC052252">
    <property type="protein sequence ID" value="AAH52252.1"/>
    <property type="molecule type" value="mRNA"/>
</dbReference>
<dbReference type="CCDS" id="CCDS10887.1"/>
<dbReference type="RefSeq" id="NP_478126.1">
    <property type="nucleotide sequence ID" value="NM_058219.3"/>
</dbReference>
<dbReference type="PDB" id="2NN6">
    <property type="method" value="X-ray"/>
    <property type="resolution" value="3.35 A"/>
    <property type="chains" value="F=1-272"/>
</dbReference>
<dbReference type="PDB" id="6D6Q">
    <property type="method" value="EM"/>
    <property type="resolution" value="3.45 A"/>
    <property type="chains" value="F=1-272"/>
</dbReference>
<dbReference type="PDB" id="6D6R">
    <property type="method" value="EM"/>
    <property type="resolution" value="3.45 A"/>
    <property type="chains" value="F=1-272"/>
</dbReference>
<dbReference type="PDB" id="6H25">
    <property type="method" value="EM"/>
    <property type="resolution" value="3.80 A"/>
    <property type="chains" value="F=1-272"/>
</dbReference>
<dbReference type="PDB" id="9G8N">
    <property type="method" value="EM"/>
    <property type="resolution" value="3.70 A"/>
    <property type="chains" value="G=1-272"/>
</dbReference>
<dbReference type="PDB" id="9G8O">
    <property type="method" value="EM"/>
    <property type="resolution" value="3.40 A"/>
    <property type="chains" value="G=1-272"/>
</dbReference>
<dbReference type="PDB" id="9G8P">
    <property type="method" value="EM"/>
    <property type="resolution" value="7.00 A"/>
    <property type="chains" value="G=1-272"/>
</dbReference>
<dbReference type="PDBsum" id="2NN6"/>
<dbReference type="PDBsum" id="6D6Q"/>
<dbReference type="PDBsum" id="6D6R"/>
<dbReference type="PDBsum" id="6H25"/>
<dbReference type="PDBsum" id="9G8N"/>
<dbReference type="PDBsum" id="9G8O"/>
<dbReference type="PDBsum" id="9G8P"/>
<dbReference type="EMDB" id="EMD-0127"/>
<dbReference type="EMDB" id="EMD-0128"/>
<dbReference type="EMDB" id="EMD-14515"/>
<dbReference type="EMDB" id="EMD-51132"/>
<dbReference type="EMDB" id="EMD-51133"/>
<dbReference type="EMDB" id="EMD-51134"/>
<dbReference type="EMDB" id="EMD-51135"/>
<dbReference type="EMDB" id="EMD-7808"/>
<dbReference type="EMDB" id="EMD-7809"/>
<dbReference type="EMDB" id="EMD-7818"/>
<dbReference type="EMDB" id="EMD-7819"/>
<dbReference type="SMR" id="Q5RKV6"/>
<dbReference type="BioGRID" id="125608">
    <property type="interactions" value="128"/>
</dbReference>
<dbReference type="ComplexPortal" id="CPX-476">
    <property type="entry name" value="Nuclear exosome complex, DIS3-EXOSC10 variant"/>
</dbReference>
<dbReference type="ComplexPortal" id="CPX-591">
    <property type="entry name" value="Nucleolar exosome complex, EXOSC10 variant"/>
</dbReference>
<dbReference type="ComplexPortal" id="CPX-592">
    <property type="entry name" value="Cytoplasmic exosome complex, DIS3L variant"/>
</dbReference>
<dbReference type="ComplexPortal" id="CPX-593">
    <property type="entry name" value="Exosome complex, DIS3 variant"/>
</dbReference>
<dbReference type="ComplexPortal" id="CPX-600">
    <property type="entry name" value="Cytoplasmic exosome complex, DIS3L-EXOSC10 variant"/>
</dbReference>
<dbReference type="CORUM" id="Q5RKV6"/>
<dbReference type="DIP" id="DIP-61038N"/>
<dbReference type="FunCoup" id="Q5RKV6">
    <property type="interactions" value="973"/>
</dbReference>
<dbReference type="IntAct" id="Q5RKV6">
    <property type="interactions" value="32"/>
</dbReference>
<dbReference type="MINT" id="Q5RKV6"/>
<dbReference type="STRING" id="9606.ENSP00000398597"/>
<dbReference type="GlyGen" id="Q5RKV6">
    <property type="glycosylation" value="1 site, 1 O-linked glycan (1 site)"/>
</dbReference>
<dbReference type="iPTMnet" id="Q5RKV6"/>
<dbReference type="PhosphoSitePlus" id="Q5RKV6"/>
<dbReference type="SwissPalm" id="Q5RKV6"/>
<dbReference type="BioMuta" id="EXOSC6"/>
<dbReference type="DMDM" id="74736141"/>
<dbReference type="jPOST" id="Q5RKV6"/>
<dbReference type="MassIVE" id="Q5RKV6"/>
<dbReference type="PaxDb" id="9606-ENSP00000398597"/>
<dbReference type="PeptideAtlas" id="Q5RKV6"/>
<dbReference type="ProteomicsDB" id="63753"/>
<dbReference type="Pumba" id="Q5RKV6"/>
<dbReference type="TopDownProteomics" id="Q5RKV6"/>
<dbReference type="Antibodypedia" id="29956">
    <property type="antibodies" value="90 antibodies from 15 providers"/>
</dbReference>
<dbReference type="DNASU" id="118460"/>
<dbReference type="Ensembl" id="ENST00000435634.3">
    <property type="protein sequence ID" value="ENSP00000398597.1"/>
    <property type="gene ID" value="ENSG00000223496.3"/>
</dbReference>
<dbReference type="GeneID" id="118460"/>
<dbReference type="KEGG" id="hsa:118460"/>
<dbReference type="MANE-Select" id="ENST00000435634.3">
    <property type="protein sequence ID" value="ENSP00000398597.1"/>
    <property type="RefSeq nucleotide sequence ID" value="NM_058219.3"/>
    <property type="RefSeq protein sequence ID" value="NP_478126.1"/>
</dbReference>
<dbReference type="UCSC" id="uc002eym.2">
    <property type="organism name" value="human"/>
</dbReference>
<dbReference type="AGR" id="HGNC:19055"/>
<dbReference type="CTD" id="118460"/>
<dbReference type="DisGeNET" id="118460"/>
<dbReference type="GeneCards" id="EXOSC6"/>
<dbReference type="HGNC" id="HGNC:19055">
    <property type="gene designation" value="EXOSC6"/>
</dbReference>
<dbReference type="HPA" id="ENSG00000223496">
    <property type="expression patterns" value="Low tissue specificity"/>
</dbReference>
<dbReference type="MalaCards" id="EXOSC6"/>
<dbReference type="MIM" id="606490">
    <property type="type" value="gene"/>
</dbReference>
<dbReference type="neXtProt" id="NX_Q5RKV6"/>
<dbReference type="OpenTargets" id="ENSG00000223496"/>
<dbReference type="PharmGKB" id="PA134932096"/>
<dbReference type="VEuPathDB" id="HostDB:ENSG00000223496"/>
<dbReference type="eggNOG" id="KOG1068">
    <property type="taxonomic scope" value="Eukaryota"/>
</dbReference>
<dbReference type="GeneTree" id="ENSGT00940000153348"/>
<dbReference type="HOGENOM" id="CLU_063514_1_3_1"/>
<dbReference type="InParanoid" id="Q5RKV6"/>
<dbReference type="OMA" id="MCCVYGP"/>
<dbReference type="OrthoDB" id="2504340at2759"/>
<dbReference type="PAN-GO" id="Q5RKV6">
    <property type="GO annotations" value="8 GO annotations based on evolutionary models"/>
</dbReference>
<dbReference type="PhylomeDB" id="Q5RKV6"/>
<dbReference type="TreeFam" id="TF323886"/>
<dbReference type="PathwayCommons" id="Q5RKV6"/>
<dbReference type="Reactome" id="R-HSA-380994">
    <property type="pathway name" value="ATF4 activates genes in response to endoplasmic reticulum stress"/>
</dbReference>
<dbReference type="Reactome" id="R-HSA-429958">
    <property type="pathway name" value="mRNA decay by 3' to 5' exoribonuclease"/>
</dbReference>
<dbReference type="Reactome" id="R-HSA-450385">
    <property type="pathway name" value="Butyrate Response Factor 1 (BRF1) binds and destabilizes mRNA"/>
</dbReference>
<dbReference type="Reactome" id="R-HSA-450513">
    <property type="pathway name" value="Tristetraprolin (TTP, ZFP36) binds and destabilizes mRNA"/>
</dbReference>
<dbReference type="Reactome" id="R-HSA-450604">
    <property type="pathway name" value="KSRP (KHSRP) binds and destabilizes mRNA"/>
</dbReference>
<dbReference type="Reactome" id="R-HSA-6791226">
    <property type="pathway name" value="Major pathway of rRNA processing in the nucleolus and cytosol"/>
</dbReference>
<dbReference type="SignaLink" id="Q5RKV6"/>
<dbReference type="SIGNOR" id="Q5RKV6"/>
<dbReference type="BioGRID-ORCS" id="118460">
    <property type="hits" value="811 hits in 1171 CRISPR screens"/>
</dbReference>
<dbReference type="CD-CODE" id="91857CE7">
    <property type="entry name" value="Nucleolus"/>
</dbReference>
<dbReference type="ChiTaRS" id="EXOSC6">
    <property type="organism name" value="human"/>
</dbReference>
<dbReference type="EvolutionaryTrace" id="Q5RKV6"/>
<dbReference type="GenomeRNAi" id="118460"/>
<dbReference type="Pharos" id="Q5RKV6">
    <property type="development level" value="Tbio"/>
</dbReference>
<dbReference type="PRO" id="PR:Q5RKV6"/>
<dbReference type="Proteomes" id="UP000005640">
    <property type="component" value="Chromosome 16"/>
</dbReference>
<dbReference type="RNAct" id="Q5RKV6">
    <property type="molecule type" value="protein"/>
</dbReference>
<dbReference type="Bgee" id="ENSG00000223496">
    <property type="expression patterns" value="Expressed in buccal mucosa cell and 169 other cell types or tissues"/>
</dbReference>
<dbReference type="GO" id="GO:0000177">
    <property type="term" value="C:cytoplasmic exosome (RNase complex)"/>
    <property type="evidence" value="ECO:0000318"/>
    <property type="project" value="GO_Central"/>
</dbReference>
<dbReference type="GO" id="GO:0005829">
    <property type="term" value="C:cytosol"/>
    <property type="evidence" value="ECO:0000314"/>
    <property type="project" value="ComplexPortal"/>
</dbReference>
<dbReference type="GO" id="GO:0000178">
    <property type="term" value="C:exosome (RNase complex)"/>
    <property type="evidence" value="ECO:0000314"/>
    <property type="project" value="UniProtKB"/>
</dbReference>
<dbReference type="GO" id="GO:0000176">
    <property type="term" value="C:nuclear exosome (RNase complex)"/>
    <property type="evidence" value="ECO:0000318"/>
    <property type="project" value="GO_Central"/>
</dbReference>
<dbReference type="GO" id="GO:0101019">
    <property type="term" value="C:nucleolar exosome (RNase complex)"/>
    <property type="evidence" value="ECO:0000303"/>
    <property type="project" value="ComplexPortal"/>
</dbReference>
<dbReference type="GO" id="GO:0005730">
    <property type="term" value="C:nucleolus"/>
    <property type="evidence" value="ECO:0000314"/>
    <property type="project" value="ComplexPortal"/>
</dbReference>
<dbReference type="GO" id="GO:0005654">
    <property type="term" value="C:nucleoplasm"/>
    <property type="evidence" value="ECO:0000304"/>
    <property type="project" value="Reactome"/>
</dbReference>
<dbReference type="GO" id="GO:0005634">
    <property type="term" value="C:nucleus"/>
    <property type="evidence" value="ECO:0000314"/>
    <property type="project" value="ComplexPortal"/>
</dbReference>
<dbReference type="GO" id="GO:0003723">
    <property type="term" value="F:RNA binding"/>
    <property type="evidence" value="ECO:0007005"/>
    <property type="project" value="UniProtKB"/>
</dbReference>
<dbReference type="GO" id="GO:0045006">
    <property type="term" value="P:DNA deamination"/>
    <property type="evidence" value="ECO:0000314"/>
    <property type="project" value="UniProtKB"/>
</dbReference>
<dbReference type="GO" id="GO:0045190">
    <property type="term" value="P:isotype switching"/>
    <property type="evidence" value="ECO:0000250"/>
    <property type="project" value="UniProtKB"/>
</dbReference>
<dbReference type="GO" id="GO:0071028">
    <property type="term" value="P:nuclear mRNA surveillance"/>
    <property type="evidence" value="ECO:0000318"/>
    <property type="project" value="GO_Central"/>
</dbReference>
<dbReference type="GO" id="GO:0071051">
    <property type="term" value="P:poly(A)-dependent snoRNA 3'-end processing"/>
    <property type="evidence" value="ECO:0000318"/>
    <property type="project" value="GO_Central"/>
</dbReference>
<dbReference type="GO" id="GO:0045830">
    <property type="term" value="P:positive regulation of isotype switching"/>
    <property type="evidence" value="ECO:0007669"/>
    <property type="project" value="Ensembl"/>
</dbReference>
<dbReference type="GO" id="GO:0006401">
    <property type="term" value="P:RNA catabolic process"/>
    <property type="evidence" value="ECO:0000314"/>
    <property type="project" value="ComplexPortal"/>
</dbReference>
<dbReference type="GO" id="GO:0006396">
    <property type="term" value="P:RNA processing"/>
    <property type="evidence" value="ECO:0000314"/>
    <property type="project" value="ComplexPortal"/>
</dbReference>
<dbReference type="GO" id="GO:0016075">
    <property type="term" value="P:rRNA catabolic process"/>
    <property type="evidence" value="ECO:0000318"/>
    <property type="project" value="GO_Central"/>
</dbReference>
<dbReference type="GO" id="GO:0006364">
    <property type="term" value="P:rRNA processing"/>
    <property type="evidence" value="ECO:0007669"/>
    <property type="project" value="UniProtKB-KW"/>
</dbReference>
<dbReference type="GO" id="GO:0034475">
    <property type="term" value="P:U4 snRNA 3'-end processing"/>
    <property type="evidence" value="ECO:0000318"/>
    <property type="project" value="GO_Central"/>
</dbReference>
<dbReference type="CDD" id="cd11371">
    <property type="entry name" value="RNase_PH_MTR3"/>
    <property type="match status" value="1"/>
</dbReference>
<dbReference type="FunFam" id="3.30.230.70:FF:000023">
    <property type="entry name" value="exosome complex component MTR3"/>
    <property type="match status" value="1"/>
</dbReference>
<dbReference type="Gene3D" id="3.30.230.70">
    <property type="entry name" value="GHMP Kinase, N-terminal domain"/>
    <property type="match status" value="1"/>
</dbReference>
<dbReference type="InterPro" id="IPR001247">
    <property type="entry name" value="ExoRNase_PH_dom1"/>
</dbReference>
<dbReference type="InterPro" id="IPR036345">
    <property type="entry name" value="ExoRNase_PH_dom2_sf"/>
</dbReference>
<dbReference type="InterPro" id="IPR027408">
    <property type="entry name" value="PNPase/RNase_PH_dom_sf"/>
</dbReference>
<dbReference type="InterPro" id="IPR020568">
    <property type="entry name" value="Ribosomal_Su5_D2-typ_SF"/>
</dbReference>
<dbReference type="InterPro" id="IPR050080">
    <property type="entry name" value="RNase_PH"/>
</dbReference>
<dbReference type="PANTHER" id="PTHR11953">
    <property type="entry name" value="EXOSOME COMPLEX COMPONENT"/>
    <property type="match status" value="1"/>
</dbReference>
<dbReference type="PANTHER" id="PTHR11953:SF2">
    <property type="entry name" value="EXOSOME COMPLEX COMPONENT MTR3"/>
    <property type="match status" value="1"/>
</dbReference>
<dbReference type="Pfam" id="PF01138">
    <property type="entry name" value="RNase_PH"/>
    <property type="match status" value="1"/>
</dbReference>
<dbReference type="SUPFAM" id="SSF55666">
    <property type="entry name" value="Ribonuclease PH domain 2-like"/>
    <property type="match status" value="1"/>
</dbReference>
<dbReference type="SUPFAM" id="SSF54211">
    <property type="entry name" value="Ribosomal protein S5 domain 2-like"/>
    <property type="match status" value="1"/>
</dbReference>
<accession>Q5RKV6</accession>
<comment type="function">
    <text evidence="4">Non-catalytic component of the RNA exosome complex which has 3'-&gt;5' exoribonuclease activity and participates in a multitude of cellular RNA processing and degradation events. In the nucleus, the RNA exosome complex is involved in proper maturation of stable RNA species such as rRNA, snRNA and snoRNA, in the elimination of RNA processing by-products and non-coding 'pervasive' transcripts, such as antisense RNA species and promoter-upstream transcripts (PROMPTs), and of mRNAs with processing defects, thereby limiting or excluding their export to the cytoplasm. The RNA exosome may be involved in Ig class switch recombination (CSR) and/or Ig variable region somatic hypermutation (SHM) by targeting AICDA deamination activity to transcribed dsDNA substrates. In the cytoplasm, the RNA exosome complex is involved in general mRNA turnover and specifically degrades inherently unstable mRNAs containing AU-rich elements (AREs) within their 3' untranslated regions, and in RNA surveillance pathways, preventing translation of aberrant mRNAs. It seems to be involved in degradation of histone mRNA. The catalytic inactive RNA exosome core complex of 9 subunits (Exo-9) is proposed to play a pivotal role in the binding and presentation of RNA for ribonucleolysis, and to serve as a scaffold for the association with catalytic subunits and accessory proteins or complexes.</text>
</comment>
<comment type="subunit">
    <text evidence="2 3 5 6">Component of the RNA exosome core complex (Exo-9), composed of EXOSC1, EXOSC2, EXOSC3, EXOSC4, EXOSC5, EXOSC6, EXOSC7, EXOSC8 and EXOSC9; within the complex interacts with EXOSC1, EXOSC7 and EXOSC8 (PubMed:29906447, PubMed:30047866). The catalytically inactive Exo-9 may associate with the catalytic subunit EXOSC10/RRP6 (PubMed:11719186, PubMed:20531389, PubMed:29906447). Exo-9 may associate with DIS3 to form the nucleolar exosome complex, or DIS3L to form the cytoplasmic exosome complex (PubMed:11719186, PubMed:20531389, PubMed:29906447). Exo-9 is formed by a hexameric base ring consisting of the heterodimers EXOSC4-EXOSC9, EXOSC5-EXOSC8 and EXOSC6-EXOSC7, and a cap ring consisting of EXOSC1, EXOSC2 and EXOSC3 (PubMed:11719186, PubMed:20531389, PubMed:30047866). The RNA exosome complex associates with cofactors EXOSC10/RRP6, C1D/RRP47, MPHOSPH6/MPP6 and MTREX/MTR4 (PubMed:30047866).</text>
</comment>
<comment type="subcellular location">
    <subcellularLocation>
        <location evidence="7">Cytoplasm</location>
    </subcellularLocation>
    <subcellularLocation>
        <location evidence="7">Nucleus</location>
        <location evidence="7">Nucleolus</location>
    </subcellularLocation>
    <subcellularLocation>
        <location evidence="7">Nucleus</location>
    </subcellularLocation>
</comment>
<comment type="similarity">
    <text evidence="7">Belongs to the RNase PH family.</text>
</comment>
<comment type="caution">
    <text evidence="7">The six exosome core subunits containing a RNase PH-domain are not phosphorolytically active.</text>
</comment>
<feature type="chain" id="PRO_0000287478" description="Exosome complex component MTR3">
    <location>
        <begin position="1"/>
        <end position="272"/>
    </location>
</feature>
<feature type="region of interest" description="Disordered" evidence="1">
    <location>
        <begin position="1"/>
        <end position="36"/>
    </location>
</feature>
<feature type="helix" evidence="13">
    <location>
        <begin position="18"/>
        <end position="20"/>
    </location>
</feature>
<feature type="strand" evidence="13">
    <location>
        <begin position="39"/>
        <end position="43"/>
    </location>
</feature>
<feature type="strand" evidence="12">
    <location>
        <begin position="47"/>
        <end position="53"/>
    </location>
</feature>
<feature type="strand" evidence="12">
    <location>
        <begin position="57"/>
        <end position="59"/>
    </location>
</feature>
<feature type="strand" evidence="12">
    <location>
        <begin position="61"/>
        <end position="70"/>
    </location>
</feature>
<feature type="strand" evidence="12">
    <location>
        <begin position="95"/>
        <end position="102"/>
    </location>
</feature>
<feature type="strand" evidence="12">
    <location>
        <begin position="106"/>
        <end position="109"/>
    </location>
</feature>
<feature type="helix" evidence="12">
    <location>
        <begin position="116"/>
        <end position="130"/>
    </location>
</feature>
<feature type="turn" evidence="12">
    <location>
        <begin position="131"/>
        <end position="133"/>
    </location>
</feature>
<feature type="strand" evidence="12">
    <location>
        <begin position="143"/>
        <end position="152"/>
    </location>
</feature>
<feature type="helix" evidence="12">
    <location>
        <begin position="157"/>
        <end position="172"/>
    </location>
</feature>
<feature type="strand" evidence="12">
    <location>
        <begin position="176"/>
        <end position="178"/>
    </location>
</feature>
<feature type="strand" evidence="12">
    <location>
        <begin position="181"/>
        <end position="184"/>
    </location>
</feature>
<feature type="strand" evidence="13">
    <location>
        <begin position="190"/>
        <end position="192"/>
    </location>
</feature>
<feature type="strand" evidence="13">
    <location>
        <begin position="195"/>
        <end position="198"/>
    </location>
</feature>
<feature type="turn" evidence="12">
    <location>
        <begin position="201"/>
        <end position="203"/>
    </location>
</feature>
<feature type="helix" evidence="12">
    <location>
        <begin position="204"/>
        <end position="206"/>
    </location>
</feature>
<feature type="strand" evidence="12">
    <location>
        <begin position="208"/>
        <end position="216"/>
    </location>
</feature>
<feature type="turn" evidence="12">
    <location>
        <begin position="217"/>
        <end position="220"/>
    </location>
</feature>
<feature type="strand" evidence="12">
    <location>
        <begin position="221"/>
        <end position="228"/>
    </location>
</feature>
<feature type="turn" evidence="12">
    <location>
        <begin position="234"/>
        <end position="237"/>
    </location>
</feature>
<feature type="helix" evidence="12">
    <location>
        <begin position="238"/>
        <end position="267"/>
    </location>
</feature>
<keyword id="KW-0002">3D-structure</keyword>
<keyword id="KW-0963">Cytoplasm</keyword>
<keyword id="KW-0271">Exosome</keyword>
<keyword id="KW-0539">Nucleus</keyword>
<keyword id="KW-1267">Proteomics identification</keyword>
<keyword id="KW-1185">Reference proteome</keyword>
<keyword id="KW-0694">RNA-binding</keyword>
<keyword id="KW-0698">rRNA processing</keyword>
<reference key="1">
    <citation type="journal article" date="2004" name="Nature">
        <title>The sequence and analysis of duplication-rich human chromosome 16.</title>
        <authorList>
            <person name="Martin J."/>
            <person name="Han C."/>
            <person name="Gordon L.A."/>
            <person name="Terry A."/>
            <person name="Prabhakar S."/>
            <person name="She X."/>
            <person name="Xie G."/>
            <person name="Hellsten U."/>
            <person name="Chan Y.M."/>
            <person name="Altherr M."/>
            <person name="Couronne O."/>
            <person name="Aerts A."/>
            <person name="Bajorek E."/>
            <person name="Black S."/>
            <person name="Blumer H."/>
            <person name="Branscomb E."/>
            <person name="Brown N.C."/>
            <person name="Bruno W.J."/>
            <person name="Buckingham J.M."/>
            <person name="Callen D.F."/>
            <person name="Campbell C.S."/>
            <person name="Campbell M.L."/>
            <person name="Campbell E.W."/>
            <person name="Caoile C."/>
            <person name="Challacombe J.F."/>
            <person name="Chasteen L.A."/>
            <person name="Chertkov O."/>
            <person name="Chi H.C."/>
            <person name="Christensen M."/>
            <person name="Clark L.M."/>
            <person name="Cohn J.D."/>
            <person name="Denys M."/>
            <person name="Detter J.C."/>
            <person name="Dickson M."/>
            <person name="Dimitrijevic-Bussod M."/>
            <person name="Escobar J."/>
            <person name="Fawcett J.J."/>
            <person name="Flowers D."/>
            <person name="Fotopulos D."/>
            <person name="Glavina T."/>
            <person name="Gomez M."/>
            <person name="Gonzales E."/>
            <person name="Goodstein D."/>
            <person name="Goodwin L.A."/>
            <person name="Grady D.L."/>
            <person name="Grigoriev I."/>
            <person name="Groza M."/>
            <person name="Hammon N."/>
            <person name="Hawkins T."/>
            <person name="Haydu L."/>
            <person name="Hildebrand C.E."/>
            <person name="Huang W."/>
            <person name="Israni S."/>
            <person name="Jett J."/>
            <person name="Jewett P.B."/>
            <person name="Kadner K."/>
            <person name="Kimball H."/>
            <person name="Kobayashi A."/>
            <person name="Krawczyk M.-C."/>
            <person name="Leyba T."/>
            <person name="Longmire J.L."/>
            <person name="Lopez F."/>
            <person name="Lou Y."/>
            <person name="Lowry S."/>
            <person name="Ludeman T."/>
            <person name="Manohar C.F."/>
            <person name="Mark G.A."/>
            <person name="McMurray K.L."/>
            <person name="Meincke L.J."/>
            <person name="Morgan J."/>
            <person name="Moyzis R.K."/>
            <person name="Mundt M.O."/>
            <person name="Munk A.C."/>
            <person name="Nandkeshwar R.D."/>
            <person name="Pitluck S."/>
            <person name="Pollard M."/>
            <person name="Predki P."/>
            <person name="Parson-Quintana B."/>
            <person name="Ramirez L."/>
            <person name="Rash S."/>
            <person name="Retterer J."/>
            <person name="Ricke D.O."/>
            <person name="Robinson D.L."/>
            <person name="Rodriguez A."/>
            <person name="Salamov A."/>
            <person name="Saunders E.H."/>
            <person name="Scott D."/>
            <person name="Shough T."/>
            <person name="Stallings R.L."/>
            <person name="Stalvey M."/>
            <person name="Sutherland R.D."/>
            <person name="Tapia R."/>
            <person name="Tesmer J.G."/>
            <person name="Thayer N."/>
            <person name="Thompson L.S."/>
            <person name="Tice H."/>
            <person name="Torney D.C."/>
            <person name="Tran-Gyamfi M."/>
            <person name="Tsai M."/>
            <person name="Ulanovsky L.E."/>
            <person name="Ustaszewska A."/>
            <person name="Vo N."/>
            <person name="White P.S."/>
            <person name="Williams A.L."/>
            <person name="Wills P.L."/>
            <person name="Wu J.-R."/>
            <person name="Wu K."/>
            <person name="Yang J."/>
            <person name="DeJong P."/>
            <person name="Bruce D."/>
            <person name="Doggett N.A."/>
            <person name="Deaven L."/>
            <person name="Schmutz J."/>
            <person name="Grimwood J."/>
            <person name="Richardson P."/>
            <person name="Rokhsar D.S."/>
            <person name="Eichler E.E."/>
            <person name="Gilna P."/>
            <person name="Lucas S.M."/>
            <person name="Myers R.M."/>
            <person name="Rubin E.M."/>
            <person name="Pennacchio L.A."/>
        </authorList>
    </citation>
    <scope>NUCLEOTIDE SEQUENCE [LARGE SCALE GENOMIC DNA]</scope>
    <source>
        <tissue>Salivary gland</tissue>
    </source>
</reference>
<reference key="2">
    <citation type="journal article" date="2004" name="Genome Res.">
        <title>The status, quality, and expansion of the NIH full-length cDNA project: the Mammalian Gene Collection (MGC).</title>
        <authorList>
            <consortium name="The MGC Project Team"/>
        </authorList>
    </citation>
    <scope>NUCLEOTIDE SEQUENCE [LARGE SCALE MRNA]</scope>
    <source>
        <tissue>Salivary gland</tissue>
    </source>
</reference>
<reference key="3">
    <citation type="journal article" date="2001" name="Cell">
        <title>AU binding proteins recruit the exosome to degrade ARE-containing mRNAs.</title>
        <authorList>
            <person name="Chen C.-Y."/>
            <person name="Gherzi R."/>
            <person name="Ong S.-E."/>
            <person name="Chan E.L."/>
            <person name="Raijmakers R."/>
            <person name="Pruijn G.J.M."/>
            <person name="Stoecklin G."/>
            <person name="Moroni C."/>
            <person name="Mann M."/>
            <person name="Karin M."/>
        </authorList>
    </citation>
    <scope>IDENTIFICATION BY MASS SPECTROMETRY</scope>
    <scope>IDENTIFICATION IN THE RNA EXOSOME CORE COMPLEX</scope>
</reference>
<reference key="4">
    <citation type="journal article" date="2002" name="J. Mol. Biol.">
        <title>Protein-protein interactions between human exosome components support the assembly of RNase PH-type subunits into a six-membered PNPase-like ring.</title>
        <authorList>
            <person name="Raijmakers R."/>
            <person name="Vree Egberts W."/>
            <person name="van Venrooij W.J."/>
            <person name="Pruijn G.J.M."/>
        </authorList>
    </citation>
    <scope>PROTEIN INTERACTION</scope>
</reference>
<reference key="5">
    <citation type="journal article" date="2004" name="Genome Res.">
        <title>A protein interaction framework for human mRNA degradation.</title>
        <authorList>
            <person name="Lehner B."/>
            <person name="Sanderson C.M."/>
        </authorList>
    </citation>
    <scope>PROTEIN INTERACTION</scope>
</reference>
<reference key="6">
    <citation type="journal article" date="2010" name="EMBO J.">
        <title>Dis3-like 1: a novel exoribonuclease associated with the human exosome.</title>
        <authorList>
            <person name="Staals R.H."/>
            <person name="Bronkhorst A.W."/>
            <person name="Schilders G."/>
            <person name="Slomovic S."/>
            <person name="Schuster G."/>
            <person name="Heck A.J."/>
            <person name="Raijmakers R."/>
            <person name="Pruijn G.J."/>
        </authorList>
    </citation>
    <scope>IDENTIFICATION IN THE RNA EXOSOME COMPLEX</scope>
    <scope>IDENTIFICATION BY MASS SPECTROMETRY</scope>
</reference>
<reference key="7">
    <citation type="journal article" date="2011" name="BMC Syst. Biol.">
        <title>Initial characterization of the human central proteome.</title>
        <authorList>
            <person name="Burkard T.R."/>
            <person name="Planyavsky M."/>
            <person name="Kaupe I."/>
            <person name="Breitwieser F.P."/>
            <person name="Buerckstuemmer T."/>
            <person name="Bennett K.L."/>
            <person name="Superti-Furga G."/>
            <person name="Colinge J."/>
        </authorList>
    </citation>
    <scope>IDENTIFICATION BY MASS SPECTROMETRY [LARGE SCALE ANALYSIS]</scope>
</reference>
<reference key="8">
    <citation type="journal article" date="2011" name="Cell">
        <title>The RNA exosome targets the AID cytidine deaminase to both strands of transcribed duplex DNA substrates.</title>
        <authorList>
            <person name="Basu U."/>
            <person name="Meng F.L."/>
            <person name="Keim C."/>
            <person name="Grinstein V."/>
            <person name="Pefanis E."/>
            <person name="Eccleston J."/>
            <person name="Zhang T."/>
            <person name="Myers D."/>
            <person name="Wasserman C.R."/>
            <person name="Wesemann D.R."/>
            <person name="Januszyk K."/>
            <person name="Gregory R.I."/>
            <person name="Deng H."/>
            <person name="Lima C.D."/>
            <person name="Alt F.W."/>
        </authorList>
    </citation>
    <scope>FUNCTION IN DEAMINATION OF TRANSCRIBED DNA SUBSTRATE</scope>
</reference>
<reference evidence="8" key="9">
    <citation type="journal article" date="2006" name="Cell">
        <title>Reconstitution, activities, and structure of the eukaryotic RNA exosome.</title>
        <authorList>
            <person name="Liu Q."/>
            <person name="Greimann J.C."/>
            <person name="Lima C.D."/>
        </authorList>
    </citation>
    <scope>X-RAY CRYSTALLOGRAPHY (3.35 ANGSTROMS)</scope>
    <scope>LACK OF CATALYTIC ACTIVITY</scope>
    <scope>RECONSTITUTION OF THE RNA EXOSOME CORE COMPLEX</scope>
</reference>
<reference key="10">
    <citation type="journal article" date="2007" name="Cell">
        <authorList>
            <person name="Liu Q."/>
            <person name="Greimann J.C."/>
            <person name="Lima C.D."/>
        </authorList>
    </citation>
    <scope>ERRATUM OF PUBMED:17174896</scope>
</reference>
<reference evidence="9 10" key="11">
    <citation type="journal article" date="2018" name="Cell">
        <title>Helicase-Dependent RNA Decay Illuminated by a Cryo-EM Structure of a Human Nuclear RNA Exosome-MTR4 Complex.</title>
        <authorList>
            <person name="Weick E.M."/>
            <person name="Puno M.R."/>
            <person name="Januszyk K."/>
            <person name="Zinder J.C."/>
            <person name="DiMattia M.A."/>
            <person name="Lima C.D."/>
        </authorList>
    </citation>
    <scope>STRUCTURE BY ELECTRON MICROSCOPY (3.45 ANGSTROMS)</scope>
    <scope>SUBUNIT</scope>
</reference>
<reference evidence="11" key="12">
    <citation type="journal article" date="2018" name="Elife">
        <title>Distinct and evolutionary conserved structural features of the human nuclear exosome complex.</title>
        <authorList>
            <person name="Gerlach P."/>
            <person name="Schuller J.M."/>
            <person name="Bonneau F."/>
            <person name="Basquin J."/>
            <person name="Reichelt P."/>
            <person name="Falk S."/>
            <person name="Conti E."/>
        </authorList>
    </citation>
    <scope>STRUCTURE BY ELECTRON MICROSCOPY (3.80 ANGSTROMS) OF THE RNA EXOSOME COMPLEX IN COMPLEX WITH MPP6</scope>
    <scope>SUBUNIT</scope>
</reference>
<sequence>MPGDHRRIRGPEESQPPQLYAADEEEAPGTRDPTRLRPVYARAGLLSQAKGSAYLEAGGTKVLCAVSGPRQAEGGERGGGPAGAGGEAPAALRGRLLCDFRRAPFAGRRRRAPPGGCEERELALALQEALEPAVRLGRYPRAQLEVSALLLEDGGSALAAALTAAALALADAGVEMYDLVVGCGLSLAPGPAPTWLLDPTRLEEERAAAGLTVALMPVLNQVAGLLGSGEGGLTESWAEAVRLGLEGCQRLYPVLQQSLVRAARRRGAAAQP</sequence>